<accession>B2TTB3</accession>
<reference key="1">
    <citation type="submission" date="2008-05" db="EMBL/GenBank/DDBJ databases">
        <title>Complete sequence of Shigella boydii serotype 18 strain BS512.</title>
        <authorList>
            <person name="Rasko D.A."/>
            <person name="Rosovitz M."/>
            <person name="Maurelli A.T."/>
            <person name="Myers G."/>
            <person name="Seshadri R."/>
            <person name="Cer R."/>
            <person name="Jiang L."/>
            <person name="Ravel J."/>
            <person name="Sebastian Y."/>
        </authorList>
    </citation>
    <scope>NUCLEOTIDE SEQUENCE [LARGE SCALE GENOMIC DNA]</scope>
    <source>
        <strain>CDC 3083-94 / BS512</strain>
    </source>
</reference>
<proteinExistence type="inferred from homology"/>
<evidence type="ECO:0000255" key="1">
    <source>
        <dbReference type="HAMAP-Rule" id="MF_00041"/>
    </source>
</evidence>
<protein>
    <recommendedName>
        <fullName evidence="1">Cysteine--tRNA ligase</fullName>
        <ecNumber evidence="1">6.1.1.16</ecNumber>
    </recommendedName>
    <alternativeName>
        <fullName evidence="1">Cysteinyl-tRNA synthetase</fullName>
        <shortName evidence="1">CysRS</shortName>
    </alternativeName>
</protein>
<sequence>MLKIFNTLTRQKEEFKPIHAGEVGMYVCGITVYDLCHIGHGRTFVAFDVVARYLRFLGYKLKYVRNITDIDDKIIKRANENGESFVALVDRMIAEMHKDFDALNILRPDMEPRATHHIAEIIELTEQLIAKGHAYVADNGDVMFDVPTDPTYGVLSRQDLDQLQAGARVDVVDDKRNPMDFVLWKMSKEGEPSWPSPWGAGRPGWHIECSAMNCKQLGNHFDIHGGGSDLMFPHHENEIAQSTCAHDGQYVNYWMHSGMVMVDREKMSKSLGNFFTVRDVLKYYDAETVRYFLMSGHYRSQLNYSEENLKQTRAALERLYTALRGTDKTVAPAGGEAFEARFIEAMDDDFNTPEAYSVLFDMAREVNRLKAEDMAAANAMASHLRKLSAVLGLLEQEPEAFLQSGAQADDSEVAEIEALIQQRLDARKAKDWAAADAARDRLNEMGIVLEDGPQGTTWRRK</sequence>
<name>SYC_SHIB3</name>
<dbReference type="EC" id="6.1.1.16" evidence="1"/>
<dbReference type="EMBL" id="CP001063">
    <property type="protein sequence ID" value="ACD10362.1"/>
    <property type="molecule type" value="Genomic_DNA"/>
</dbReference>
<dbReference type="RefSeq" id="WP_000912353.1">
    <property type="nucleotide sequence ID" value="NC_010658.1"/>
</dbReference>
<dbReference type="SMR" id="B2TTB3"/>
<dbReference type="STRING" id="344609.SbBS512_E0448"/>
<dbReference type="KEGG" id="sbc:SbBS512_E0448"/>
<dbReference type="HOGENOM" id="CLU_013528_0_1_6"/>
<dbReference type="Proteomes" id="UP000001030">
    <property type="component" value="Chromosome"/>
</dbReference>
<dbReference type="GO" id="GO:0005829">
    <property type="term" value="C:cytosol"/>
    <property type="evidence" value="ECO:0007669"/>
    <property type="project" value="TreeGrafter"/>
</dbReference>
<dbReference type="GO" id="GO:0005524">
    <property type="term" value="F:ATP binding"/>
    <property type="evidence" value="ECO:0007669"/>
    <property type="project" value="UniProtKB-UniRule"/>
</dbReference>
<dbReference type="GO" id="GO:0004817">
    <property type="term" value="F:cysteine-tRNA ligase activity"/>
    <property type="evidence" value="ECO:0007669"/>
    <property type="project" value="UniProtKB-UniRule"/>
</dbReference>
<dbReference type="GO" id="GO:0008270">
    <property type="term" value="F:zinc ion binding"/>
    <property type="evidence" value="ECO:0007669"/>
    <property type="project" value="UniProtKB-UniRule"/>
</dbReference>
<dbReference type="GO" id="GO:0006423">
    <property type="term" value="P:cysteinyl-tRNA aminoacylation"/>
    <property type="evidence" value="ECO:0007669"/>
    <property type="project" value="UniProtKB-UniRule"/>
</dbReference>
<dbReference type="CDD" id="cd07963">
    <property type="entry name" value="Anticodon_Ia_Cys"/>
    <property type="match status" value="1"/>
</dbReference>
<dbReference type="CDD" id="cd00672">
    <property type="entry name" value="CysRS_core"/>
    <property type="match status" value="1"/>
</dbReference>
<dbReference type="FunFam" id="1.20.120.1910:FF:000001">
    <property type="entry name" value="Cysteine--tRNA ligase"/>
    <property type="match status" value="1"/>
</dbReference>
<dbReference type="FunFam" id="3.40.50.620:FF:000009">
    <property type="entry name" value="Cysteine--tRNA ligase"/>
    <property type="match status" value="1"/>
</dbReference>
<dbReference type="Gene3D" id="1.20.120.1910">
    <property type="entry name" value="Cysteine-tRNA ligase, C-terminal anti-codon recognition domain"/>
    <property type="match status" value="1"/>
</dbReference>
<dbReference type="Gene3D" id="3.40.50.620">
    <property type="entry name" value="HUPs"/>
    <property type="match status" value="1"/>
</dbReference>
<dbReference type="HAMAP" id="MF_00041">
    <property type="entry name" value="Cys_tRNA_synth"/>
    <property type="match status" value="1"/>
</dbReference>
<dbReference type="InterPro" id="IPR015803">
    <property type="entry name" value="Cys-tRNA-ligase"/>
</dbReference>
<dbReference type="InterPro" id="IPR015273">
    <property type="entry name" value="Cys-tRNA-synt_Ia_DALR"/>
</dbReference>
<dbReference type="InterPro" id="IPR024909">
    <property type="entry name" value="Cys-tRNA/MSH_ligase"/>
</dbReference>
<dbReference type="InterPro" id="IPR056411">
    <property type="entry name" value="CysS_C"/>
</dbReference>
<dbReference type="InterPro" id="IPR014729">
    <property type="entry name" value="Rossmann-like_a/b/a_fold"/>
</dbReference>
<dbReference type="InterPro" id="IPR032678">
    <property type="entry name" value="tRNA-synt_1_cat_dom"/>
</dbReference>
<dbReference type="InterPro" id="IPR009080">
    <property type="entry name" value="tRNAsynth_Ia_anticodon-bd"/>
</dbReference>
<dbReference type="NCBIfam" id="TIGR00435">
    <property type="entry name" value="cysS"/>
    <property type="match status" value="1"/>
</dbReference>
<dbReference type="PANTHER" id="PTHR10890:SF3">
    <property type="entry name" value="CYSTEINE--TRNA LIGASE, CYTOPLASMIC"/>
    <property type="match status" value="1"/>
</dbReference>
<dbReference type="PANTHER" id="PTHR10890">
    <property type="entry name" value="CYSTEINYL-TRNA SYNTHETASE"/>
    <property type="match status" value="1"/>
</dbReference>
<dbReference type="Pfam" id="PF23493">
    <property type="entry name" value="CysS_C"/>
    <property type="match status" value="1"/>
</dbReference>
<dbReference type="Pfam" id="PF09190">
    <property type="entry name" value="DALR_2"/>
    <property type="match status" value="1"/>
</dbReference>
<dbReference type="Pfam" id="PF01406">
    <property type="entry name" value="tRNA-synt_1e"/>
    <property type="match status" value="1"/>
</dbReference>
<dbReference type="PRINTS" id="PR00983">
    <property type="entry name" value="TRNASYNTHCYS"/>
</dbReference>
<dbReference type="SMART" id="SM00840">
    <property type="entry name" value="DALR_2"/>
    <property type="match status" value="1"/>
</dbReference>
<dbReference type="SUPFAM" id="SSF47323">
    <property type="entry name" value="Anticodon-binding domain of a subclass of class I aminoacyl-tRNA synthetases"/>
    <property type="match status" value="1"/>
</dbReference>
<dbReference type="SUPFAM" id="SSF52374">
    <property type="entry name" value="Nucleotidylyl transferase"/>
    <property type="match status" value="1"/>
</dbReference>
<feature type="chain" id="PRO_1000090874" description="Cysteine--tRNA ligase">
    <location>
        <begin position="1"/>
        <end position="461"/>
    </location>
</feature>
<feature type="short sequence motif" description="'HIGH' region">
    <location>
        <begin position="30"/>
        <end position="40"/>
    </location>
</feature>
<feature type="short sequence motif" description="'KMSKS' region">
    <location>
        <begin position="266"/>
        <end position="270"/>
    </location>
</feature>
<feature type="binding site" evidence="1">
    <location>
        <position position="28"/>
    </location>
    <ligand>
        <name>Zn(2+)</name>
        <dbReference type="ChEBI" id="CHEBI:29105"/>
    </ligand>
</feature>
<feature type="binding site" evidence="1">
    <location>
        <position position="209"/>
    </location>
    <ligand>
        <name>Zn(2+)</name>
        <dbReference type="ChEBI" id="CHEBI:29105"/>
    </ligand>
</feature>
<feature type="binding site" evidence="1">
    <location>
        <position position="234"/>
    </location>
    <ligand>
        <name>Zn(2+)</name>
        <dbReference type="ChEBI" id="CHEBI:29105"/>
    </ligand>
</feature>
<feature type="binding site" evidence="1">
    <location>
        <position position="238"/>
    </location>
    <ligand>
        <name>Zn(2+)</name>
        <dbReference type="ChEBI" id="CHEBI:29105"/>
    </ligand>
</feature>
<feature type="binding site" evidence="1">
    <location>
        <position position="269"/>
    </location>
    <ligand>
        <name>ATP</name>
        <dbReference type="ChEBI" id="CHEBI:30616"/>
    </ligand>
</feature>
<comment type="catalytic activity">
    <reaction evidence="1">
        <text>tRNA(Cys) + L-cysteine + ATP = L-cysteinyl-tRNA(Cys) + AMP + diphosphate</text>
        <dbReference type="Rhea" id="RHEA:17773"/>
        <dbReference type="Rhea" id="RHEA-COMP:9661"/>
        <dbReference type="Rhea" id="RHEA-COMP:9679"/>
        <dbReference type="ChEBI" id="CHEBI:30616"/>
        <dbReference type="ChEBI" id="CHEBI:33019"/>
        <dbReference type="ChEBI" id="CHEBI:35235"/>
        <dbReference type="ChEBI" id="CHEBI:78442"/>
        <dbReference type="ChEBI" id="CHEBI:78517"/>
        <dbReference type="ChEBI" id="CHEBI:456215"/>
        <dbReference type="EC" id="6.1.1.16"/>
    </reaction>
</comment>
<comment type="cofactor">
    <cofactor evidence="1">
        <name>Zn(2+)</name>
        <dbReference type="ChEBI" id="CHEBI:29105"/>
    </cofactor>
    <text evidence="1">Binds 1 zinc ion per subunit.</text>
</comment>
<comment type="subunit">
    <text evidence="1">Monomer.</text>
</comment>
<comment type="subcellular location">
    <subcellularLocation>
        <location evidence="1">Cytoplasm</location>
    </subcellularLocation>
</comment>
<comment type="similarity">
    <text evidence="1">Belongs to the class-I aminoacyl-tRNA synthetase family.</text>
</comment>
<keyword id="KW-0030">Aminoacyl-tRNA synthetase</keyword>
<keyword id="KW-0067">ATP-binding</keyword>
<keyword id="KW-0963">Cytoplasm</keyword>
<keyword id="KW-0436">Ligase</keyword>
<keyword id="KW-0479">Metal-binding</keyword>
<keyword id="KW-0547">Nucleotide-binding</keyword>
<keyword id="KW-0648">Protein biosynthesis</keyword>
<keyword id="KW-1185">Reference proteome</keyword>
<keyword id="KW-0862">Zinc</keyword>
<organism>
    <name type="scientific">Shigella boydii serotype 18 (strain CDC 3083-94 / BS512)</name>
    <dbReference type="NCBI Taxonomy" id="344609"/>
    <lineage>
        <taxon>Bacteria</taxon>
        <taxon>Pseudomonadati</taxon>
        <taxon>Pseudomonadota</taxon>
        <taxon>Gammaproteobacteria</taxon>
        <taxon>Enterobacterales</taxon>
        <taxon>Enterobacteriaceae</taxon>
        <taxon>Shigella</taxon>
    </lineage>
</organism>
<gene>
    <name evidence="1" type="primary">cysS</name>
    <name type="ordered locus">SbBS512_E0448</name>
</gene>